<comment type="function">
    <text evidence="1">Component of the virion core. Participates in virion assembly.</text>
</comment>
<comment type="subunit">
    <text evidence="1">Interacts with OPG136 and its cleaved form.</text>
</comment>
<comment type="subcellular location">
    <subcellularLocation>
        <location evidence="1">Virion</location>
    </subcellularLocation>
    <subcellularLocation>
        <location evidence="1">Host endoplasmic reticulum-Golgi intermediate compartment membrane</location>
    </subcellularLocation>
    <text evidence="1">Localizes between the core and the membrane; might surround the outer core wall like a palisade (spikes).</text>
</comment>
<comment type="PTM">
    <text evidence="1">Its phosphorylation state is regulated by the OPG054 kinase and the OPG106 phosphatase.</text>
</comment>
<comment type="similarity">
    <text evidence="3">Belongs to the orthopoxvirus OPG130 family.</text>
</comment>
<gene>
    <name type="primary">OPG130</name>
    <name type="ORF">MPXVgp115</name>
</gene>
<keyword id="KW-1043">Host membrane</keyword>
<keyword id="KW-0472">Membrane</keyword>
<keyword id="KW-1185">Reference proteome</keyword>
<keyword id="KW-0946">Virion</keyword>
<feature type="chain" id="PRO_0000457504" description="39kDa core protein OPG130">
    <location>
        <begin position="1"/>
        <end position="281"/>
    </location>
</feature>
<feature type="region of interest" description="Disordered" evidence="2">
    <location>
        <begin position="1"/>
        <end position="33"/>
    </location>
</feature>
<feature type="region of interest" description="Disordered" evidence="2">
    <location>
        <begin position="149"/>
        <end position="186"/>
    </location>
</feature>
<feature type="compositionally biased region" description="Polar residues" evidence="2">
    <location>
        <begin position="1"/>
        <end position="22"/>
    </location>
</feature>
<feature type="compositionally biased region" description="Basic and acidic residues" evidence="2">
    <location>
        <begin position="24"/>
        <end position="33"/>
    </location>
</feature>
<feature type="compositionally biased region" description="Low complexity" evidence="2">
    <location>
        <begin position="155"/>
        <end position="175"/>
    </location>
</feature>
<feature type="compositionally biased region" description="Polar residues" evidence="2">
    <location>
        <begin position="176"/>
        <end position="186"/>
    </location>
</feature>
<name>PG130_MONPV</name>
<evidence type="ECO:0000250" key="1">
    <source>
        <dbReference type="UniProtKB" id="P29191"/>
    </source>
</evidence>
<evidence type="ECO:0000256" key="2">
    <source>
        <dbReference type="SAM" id="MobiDB-lite"/>
    </source>
</evidence>
<evidence type="ECO:0000305" key="3"/>
<protein>
    <recommendedName>
        <fullName>39kDa core protein OPG130</fullName>
    </recommendedName>
</protein>
<accession>A0A7H0DNA2</accession>
<dbReference type="EMBL" id="MT903340">
    <property type="protein sequence ID" value="QNP12985.1"/>
    <property type="molecule type" value="Genomic_DNA"/>
</dbReference>
<dbReference type="RefSeq" id="YP_010377112.1">
    <property type="nucleotide sequence ID" value="NC_063383.1"/>
</dbReference>
<dbReference type="SMR" id="A0A7H0DNA2"/>
<dbReference type="GeneID" id="72551525"/>
<dbReference type="Proteomes" id="UP000516359">
    <property type="component" value="Genome"/>
</dbReference>
<dbReference type="GO" id="GO:0044173">
    <property type="term" value="C:host cell endoplasmic reticulum-Golgi intermediate compartment membrane"/>
    <property type="evidence" value="ECO:0007669"/>
    <property type="project" value="UniProtKB-SubCell"/>
</dbReference>
<dbReference type="GO" id="GO:0016020">
    <property type="term" value="C:membrane"/>
    <property type="evidence" value="ECO:0007669"/>
    <property type="project" value="UniProtKB-KW"/>
</dbReference>
<dbReference type="GO" id="GO:0044423">
    <property type="term" value="C:virion component"/>
    <property type="evidence" value="ECO:0007669"/>
    <property type="project" value="UniProtKB-KW"/>
</dbReference>
<dbReference type="InterPro" id="IPR010396">
    <property type="entry name" value="Poxvirus_A4L"/>
</dbReference>
<dbReference type="Pfam" id="PF06193">
    <property type="entry name" value="Orthopox_A5L"/>
    <property type="match status" value="1"/>
</dbReference>
<organismHost>
    <name type="scientific">Cynomys gunnisoni</name>
    <name type="common">Gunnison's prairie dog</name>
    <name type="synonym">Spermophilus gunnisoni</name>
    <dbReference type="NCBI Taxonomy" id="45479"/>
</organismHost>
<organismHost>
    <name type="scientific">Cynomys leucurus</name>
    <name type="common">White-tailed prairie dog</name>
    <dbReference type="NCBI Taxonomy" id="99825"/>
</organismHost>
<organismHost>
    <name type="scientific">Cynomys ludovicianus</name>
    <name type="common">Black-tailed prairie dog</name>
    <dbReference type="NCBI Taxonomy" id="45480"/>
</organismHost>
<organismHost>
    <name type="scientific">Cynomys mexicanus</name>
    <name type="common">Mexican prairie dog</name>
    <dbReference type="NCBI Taxonomy" id="99826"/>
</organismHost>
<organismHost>
    <name type="scientific">Cynomys parvidens</name>
    <name type="common">Utah prairie dog</name>
    <dbReference type="NCBI Taxonomy" id="99827"/>
</organismHost>
<organismHost>
    <name type="scientific">Gliridae</name>
    <name type="common">dormice</name>
    <dbReference type="NCBI Taxonomy" id="30650"/>
</organismHost>
<organismHost>
    <name type="scientific">Heliosciurus ruwenzorii</name>
    <name type="common">Ruwenzori sun squirrel</name>
    <dbReference type="NCBI Taxonomy" id="226685"/>
</organismHost>
<organismHost>
    <name type="scientific">Homo sapiens</name>
    <name type="common">Human</name>
    <dbReference type="NCBI Taxonomy" id="9606"/>
</organismHost>
<organismHost>
    <name type="scientific">Mus musculus</name>
    <name type="common">Mouse</name>
    <dbReference type="NCBI Taxonomy" id="10090"/>
</organismHost>
<sequence length="281" mass="30989">MDFFNKFSQGLAESSTPKSSIYYSEEKDPDTKKDEAIEIGLKSQESYYQRQLREQLARDNMMTASRQPTQPLQPTIHITPQPVPTPTPAPILLPSSTAPVLKPRQQTNTSSDMSNLFDWLSTDTDAPASTLLPALTPSNTVQDIISKFNKDQKMTTPPSTQPSQTLPTTTCTQQSDGSISCTTPTVTPLQPPIVATVCTPTPTGGTVCTTAQQNPNPGAASQQNLDDMTLKDLMSSVEKDMRQLQAETNDLVTNVYDAREYTRRAIDQILQLVKGFERFQK</sequence>
<reference key="1">
    <citation type="journal article" date="2022" name="J. Infect. Dis.">
        <title>Exportation of Monkeypox virus from the African continent.</title>
        <authorList>
            <person name="Mauldin M.R."/>
            <person name="McCollum A.M."/>
            <person name="Nakazawa Y.J."/>
            <person name="Mandra A."/>
            <person name="Whitehouse E.R."/>
            <person name="Davidson W."/>
            <person name="Zhao H."/>
            <person name="Gao J."/>
            <person name="Li Y."/>
            <person name="Doty J."/>
            <person name="Yinka-Ogunleye A."/>
            <person name="Akinpelu A."/>
            <person name="Aruna O."/>
            <person name="Naidoo D."/>
            <person name="Lewandowski K."/>
            <person name="Afrough B."/>
            <person name="Graham V."/>
            <person name="Aarons E."/>
            <person name="Hewson R."/>
            <person name="Vipond R."/>
            <person name="Dunning J."/>
            <person name="Chand M."/>
            <person name="Brown C."/>
            <person name="Cohen-Gihon I."/>
            <person name="Erez N."/>
            <person name="Shifman O."/>
            <person name="Israeli O."/>
            <person name="Sharon M."/>
            <person name="Schwartz E."/>
            <person name="Beth-Din A."/>
            <person name="Zvi A."/>
            <person name="Mak T.M."/>
            <person name="Ng Y.K."/>
            <person name="Cui L."/>
            <person name="Lin R.T.P."/>
            <person name="Olson V.A."/>
            <person name="Brooks T."/>
            <person name="Paran N."/>
            <person name="Ihekweazu C."/>
            <person name="Reynolds M.G."/>
        </authorList>
    </citation>
    <scope>NUCLEOTIDE SEQUENCE [LARGE SCALE GENOMIC DNA]</scope>
    <source>
        <strain>MPXV-M5312_HM12_Rivers</strain>
    </source>
</reference>
<organism>
    <name type="scientific">Monkeypox virus</name>
    <dbReference type="NCBI Taxonomy" id="10244"/>
    <lineage>
        <taxon>Viruses</taxon>
        <taxon>Varidnaviria</taxon>
        <taxon>Bamfordvirae</taxon>
        <taxon>Nucleocytoviricota</taxon>
        <taxon>Pokkesviricetes</taxon>
        <taxon>Chitovirales</taxon>
        <taxon>Poxviridae</taxon>
        <taxon>Chordopoxvirinae</taxon>
        <taxon>Orthopoxvirus</taxon>
    </lineage>
</organism>
<proteinExistence type="inferred from homology"/>